<keyword id="KW-0030">Aminoacyl-tRNA synthetase</keyword>
<keyword id="KW-0067">ATP-binding</keyword>
<keyword id="KW-0963">Cytoplasm</keyword>
<keyword id="KW-0436">Ligase</keyword>
<keyword id="KW-0479">Metal-binding</keyword>
<keyword id="KW-0547">Nucleotide-binding</keyword>
<keyword id="KW-0648">Protein biosynthesis</keyword>
<keyword id="KW-1185">Reference proteome</keyword>
<keyword id="KW-0862">Zinc</keyword>
<comment type="function">
    <text evidence="1">Catalyzes the attachment of isoleucine to tRNA(Ile). As IleRS can inadvertently accommodate and process structurally similar amino acids such as valine, to avoid such errors it has two additional distinct tRNA(Ile)-dependent editing activities. One activity is designated as 'pretransfer' editing and involves the hydrolysis of activated Val-AMP. The other activity is designated 'posttransfer' editing and involves deacylation of mischarged Val-tRNA(Ile).</text>
</comment>
<comment type="catalytic activity">
    <reaction evidence="1">
        <text>tRNA(Ile) + L-isoleucine + ATP = L-isoleucyl-tRNA(Ile) + AMP + diphosphate</text>
        <dbReference type="Rhea" id="RHEA:11060"/>
        <dbReference type="Rhea" id="RHEA-COMP:9666"/>
        <dbReference type="Rhea" id="RHEA-COMP:9695"/>
        <dbReference type="ChEBI" id="CHEBI:30616"/>
        <dbReference type="ChEBI" id="CHEBI:33019"/>
        <dbReference type="ChEBI" id="CHEBI:58045"/>
        <dbReference type="ChEBI" id="CHEBI:78442"/>
        <dbReference type="ChEBI" id="CHEBI:78528"/>
        <dbReference type="ChEBI" id="CHEBI:456215"/>
        <dbReference type="EC" id="6.1.1.5"/>
    </reaction>
</comment>
<comment type="cofactor">
    <cofactor evidence="1">
        <name>Zn(2+)</name>
        <dbReference type="ChEBI" id="CHEBI:29105"/>
    </cofactor>
    <text evidence="1">Binds 1 zinc ion per subunit.</text>
</comment>
<comment type="subunit">
    <text evidence="1">Monomer.</text>
</comment>
<comment type="subcellular location">
    <subcellularLocation>
        <location evidence="1">Cytoplasm</location>
    </subcellularLocation>
</comment>
<comment type="domain">
    <text evidence="1">IleRS has two distinct active sites: one for aminoacylation and one for editing. The misactivated valine is translocated from the active site to the editing site, which sterically excludes the correctly activated isoleucine. The single editing site contains two valyl binding pockets, one specific for each substrate (Val-AMP or Val-tRNA(Ile)).</text>
</comment>
<comment type="similarity">
    <text evidence="1">Belongs to the class-I aminoacyl-tRNA synthetase family. IleS type 1 subfamily.</text>
</comment>
<reference key="1">
    <citation type="submission" date="2007-10" db="EMBL/GenBank/DDBJ databases">
        <title>Complete sequence of chromosome 1 of Burkholderia multivorans ATCC 17616.</title>
        <authorList>
            <person name="Copeland A."/>
            <person name="Lucas S."/>
            <person name="Lapidus A."/>
            <person name="Barry K."/>
            <person name="Glavina del Rio T."/>
            <person name="Dalin E."/>
            <person name="Tice H."/>
            <person name="Pitluck S."/>
            <person name="Chain P."/>
            <person name="Malfatti S."/>
            <person name="Shin M."/>
            <person name="Vergez L."/>
            <person name="Schmutz J."/>
            <person name="Larimer F."/>
            <person name="Land M."/>
            <person name="Hauser L."/>
            <person name="Kyrpides N."/>
            <person name="Kim E."/>
            <person name="Tiedje J."/>
            <person name="Richardson P."/>
        </authorList>
    </citation>
    <scope>NUCLEOTIDE SEQUENCE [LARGE SCALE GENOMIC DNA]</scope>
    <source>
        <strain>ATCC 17616 / 249</strain>
    </source>
</reference>
<reference key="2">
    <citation type="submission" date="2007-04" db="EMBL/GenBank/DDBJ databases">
        <title>Complete genome sequence of Burkholderia multivorans ATCC 17616.</title>
        <authorList>
            <person name="Ohtsubo Y."/>
            <person name="Yamashita A."/>
            <person name="Kurokawa K."/>
            <person name="Takami H."/>
            <person name="Yuhara S."/>
            <person name="Nishiyama E."/>
            <person name="Endo R."/>
            <person name="Miyazaki R."/>
            <person name="Ono A."/>
            <person name="Yano K."/>
            <person name="Ito M."/>
            <person name="Sota M."/>
            <person name="Yuji N."/>
            <person name="Hattori M."/>
            <person name="Tsuda M."/>
        </authorList>
    </citation>
    <scope>NUCLEOTIDE SEQUENCE [LARGE SCALE GENOMIC DNA]</scope>
    <source>
        <strain>ATCC 17616 / 249</strain>
    </source>
</reference>
<gene>
    <name evidence="1" type="primary">ileS</name>
    <name type="ordered locus">Bmul_0783</name>
    <name type="ordered locus">BMULJ_02477</name>
</gene>
<name>SYI_BURM1</name>
<feature type="chain" id="PRO_1000189138" description="Isoleucine--tRNA ligase">
    <location>
        <begin position="1"/>
        <end position="945"/>
    </location>
</feature>
<feature type="region of interest" description="Disordered" evidence="2">
    <location>
        <begin position="1"/>
        <end position="21"/>
    </location>
</feature>
<feature type="short sequence motif" description="'HIGH' region">
    <location>
        <begin position="66"/>
        <end position="76"/>
    </location>
</feature>
<feature type="short sequence motif" description="'KMSKS' region">
    <location>
        <begin position="622"/>
        <end position="626"/>
    </location>
</feature>
<feature type="compositionally biased region" description="Basic and acidic residues" evidence="2">
    <location>
        <begin position="1"/>
        <end position="10"/>
    </location>
</feature>
<feature type="binding site" evidence="1">
    <location>
        <position position="581"/>
    </location>
    <ligand>
        <name>L-isoleucyl-5'-AMP</name>
        <dbReference type="ChEBI" id="CHEBI:178002"/>
    </ligand>
</feature>
<feature type="binding site" evidence="1">
    <location>
        <position position="625"/>
    </location>
    <ligand>
        <name>ATP</name>
        <dbReference type="ChEBI" id="CHEBI:30616"/>
    </ligand>
</feature>
<feature type="binding site" evidence="1">
    <location>
        <position position="908"/>
    </location>
    <ligand>
        <name>Zn(2+)</name>
        <dbReference type="ChEBI" id="CHEBI:29105"/>
    </ligand>
</feature>
<feature type="binding site" evidence="1">
    <location>
        <position position="911"/>
    </location>
    <ligand>
        <name>Zn(2+)</name>
        <dbReference type="ChEBI" id="CHEBI:29105"/>
    </ligand>
</feature>
<feature type="binding site" evidence="1">
    <location>
        <position position="928"/>
    </location>
    <ligand>
        <name>Zn(2+)</name>
        <dbReference type="ChEBI" id="CHEBI:29105"/>
    </ligand>
</feature>
<feature type="binding site" evidence="1">
    <location>
        <position position="931"/>
    </location>
    <ligand>
        <name>Zn(2+)</name>
        <dbReference type="ChEBI" id="CHEBI:29105"/>
    </ligand>
</feature>
<dbReference type="EC" id="6.1.1.5" evidence="1"/>
<dbReference type="EMBL" id="CP000868">
    <property type="protein sequence ID" value="ABX14478.1"/>
    <property type="molecule type" value="Genomic_DNA"/>
</dbReference>
<dbReference type="EMBL" id="AP009385">
    <property type="protein sequence ID" value="BAG44368.1"/>
    <property type="molecule type" value="Genomic_DNA"/>
</dbReference>
<dbReference type="RefSeq" id="WP_006416148.1">
    <property type="nucleotide sequence ID" value="NC_010084.1"/>
</dbReference>
<dbReference type="SMR" id="A9AGN6"/>
<dbReference type="STRING" id="395019.BMULJ_02477"/>
<dbReference type="KEGG" id="bmj:BMULJ_02477"/>
<dbReference type="KEGG" id="bmu:Bmul_0783"/>
<dbReference type="eggNOG" id="COG0060">
    <property type="taxonomic scope" value="Bacteria"/>
</dbReference>
<dbReference type="HOGENOM" id="CLU_001493_7_1_4"/>
<dbReference type="Proteomes" id="UP000008815">
    <property type="component" value="Chromosome 1"/>
</dbReference>
<dbReference type="GO" id="GO:0005829">
    <property type="term" value="C:cytosol"/>
    <property type="evidence" value="ECO:0007669"/>
    <property type="project" value="TreeGrafter"/>
</dbReference>
<dbReference type="GO" id="GO:0002161">
    <property type="term" value="F:aminoacyl-tRNA deacylase activity"/>
    <property type="evidence" value="ECO:0007669"/>
    <property type="project" value="InterPro"/>
</dbReference>
<dbReference type="GO" id="GO:0005524">
    <property type="term" value="F:ATP binding"/>
    <property type="evidence" value="ECO:0007669"/>
    <property type="project" value="UniProtKB-UniRule"/>
</dbReference>
<dbReference type="GO" id="GO:0004822">
    <property type="term" value="F:isoleucine-tRNA ligase activity"/>
    <property type="evidence" value="ECO:0007669"/>
    <property type="project" value="UniProtKB-UniRule"/>
</dbReference>
<dbReference type="GO" id="GO:0000049">
    <property type="term" value="F:tRNA binding"/>
    <property type="evidence" value="ECO:0007669"/>
    <property type="project" value="InterPro"/>
</dbReference>
<dbReference type="GO" id="GO:0008270">
    <property type="term" value="F:zinc ion binding"/>
    <property type="evidence" value="ECO:0007669"/>
    <property type="project" value="UniProtKB-UniRule"/>
</dbReference>
<dbReference type="GO" id="GO:0006428">
    <property type="term" value="P:isoleucyl-tRNA aminoacylation"/>
    <property type="evidence" value="ECO:0007669"/>
    <property type="project" value="UniProtKB-UniRule"/>
</dbReference>
<dbReference type="CDD" id="cd07960">
    <property type="entry name" value="Anticodon_Ia_Ile_BEm"/>
    <property type="match status" value="1"/>
</dbReference>
<dbReference type="CDD" id="cd00818">
    <property type="entry name" value="IleRS_core"/>
    <property type="match status" value="1"/>
</dbReference>
<dbReference type="FunFam" id="1.10.730.20:FF:000001">
    <property type="entry name" value="Isoleucine--tRNA ligase"/>
    <property type="match status" value="1"/>
</dbReference>
<dbReference type="FunFam" id="3.40.50.620:FF:000042">
    <property type="entry name" value="Isoleucine--tRNA ligase"/>
    <property type="match status" value="1"/>
</dbReference>
<dbReference type="FunFam" id="3.40.50.620:FF:000048">
    <property type="entry name" value="Isoleucine--tRNA ligase"/>
    <property type="match status" value="1"/>
</dbReference>
<dbReference type="Gene3D" id="1.10.730.20">
    <property type="match status" value="1"/>
</dbReference>
<dbReference type="Gene3D" id="3.40.50.620">
    <property type="entry name" value="HUPs"/>
    <property type="match status" value="2"/>
</dbReference>
<dbReference type="Gene3D" id="3.90.740.10">
    <property type="entry name" value="Valyl/Leucyl/Isoleucyl-tRNA synthetase, editing domain"/>
    <property type="match status" value="1"/>
</dbReference>
<dbReference type="HAMAP" id="MF_02002">
    <property type="entry name" value="Ile_tRNA_synth_type1"/>
    <property type="match status" value="1"/>
</dbReference>
<dbReference type="InterPro" id="IPR001412">
    <property type="entry name" value="aa-tRNA-synth_I_CS"/>
</dbReference>
<dbReference type="InterPro" id="IPR002300">
    <property type="entry name" value="aa-tRNA-synth_Ia"/>
</dbReference>
<dbReference type="InterPro" id="IPR033708">
    <property type="entry name" value="Anticodon_Ile_BEm"/>
</dbReference>
<dbReference type="InterPro" id="IPR002301">
    <property type="entry name" value="Ile-tRNA-ligase"/>
</dbReference>
<dbReference type="InterPro" id="IPR023585">
    <property type="entry name" value="Ile-tRNA-ligase_type1"/>
</dbReference>
<dbReference type="InterPro" id="IPR050081">
    <property type="entry name" value="Ile-tRNA_ligase"/>
</dbReference>
<dbReference type="InterPro" id="IPR013155">
    <property type="entry name" value="M/V/L/I-tRNA-synth_anticd-bd"/>
</dbReference>
<dbReference type="InterPro" id="IPR014729">
    <property type="entry name" value="Rossmann-like_a/b/a_fold"/>
</dbReference>
<dbReference type="InterPro" id="IPR009080">
    <property type="entry name" value="tRNAsynth_Ia_anticodon-bd"/>
</dbReference>
<dbReference type="InterPro" id="IPR009008">
    <property type="entry name" value="Val/Leu/Ile-tRNA-synth_edit"/>
</dbReference>
<dbReference type="InterPro" id="IPR010663">
    <property type="entry name" value="Znf_FPG/IleRS"/>
</dbReference>
<dbReference type="NCBIfam" id="TIGR00392">
    <property type="entry name" value="ileS"/>
    <property type="match status" value="1"/>
</dbReference>
<dbReference type="PANTHER" id="PTHR42765:SF1">
    <property type="entry name" value="ISOLEUCINE--TRNA LIGASE, MITOCHONDRIAL"/>
    <property type="match status" value="1"/>
</dbReference>
<dbReference type="PANTHER" id="PTHR42765">
    <property type="entry name" value="SOLEUCYL-TRNA SYNTHETASE"/>
    <property type="match status" value="1"/>
</dbReference>
<dbReference type="Pfam" id="PF08264">
    <property type="entry name" value="Anticodon_1"/>
    <property type="match status" value="1"/>
</dbReference>
<dbReference type="Pfam" id="PF00133">
    <property type="entry name" value="tRNA-synt_1"/>
    <property type="match status" value="1"/>
</dbReference>
<dbReference type="Pfam" id="PF06827">
    <property type="entry name" value="zf-FPG_IleRS"/>
    <property type="match status" value="1"/>
</dbReference>
<dbReference type="PRINTS" id="PR00984">
    <property type="entry name" value="TRNASYNTHILE"/>
</dbReference>
<dbReference type="SUPFAM" id="SSF47323">
    <property type="entry name" value="Anticodon-binding domain of a subclass of class I aminoacyl-tRNA synthetases"/>
    <property type="match status" value="1"/>
</dbReference>
<dbReference type="SUPFAM" id="SSF52374">
    <property type="entry name" value="Nucleotidylyl transferase"/>
    <property type="match status" value="1"/>
</dbReference>
<dbReference type="SUPFAM" id="SSF50677">
    <property type="entry name" value="ValRS/IleRS/LeuRS editing domain"/>
    <property type="match status" value="1"/>
</dbReference>
<dbReference type="PROSITE" id="PS00178">
    <property type="entry name" value="AA_TRNA_LIGASE_I"/>
    <property type="match status" value="1"/>
</dbReference>
<protein>
    <recommendedName>
        <fullName evidence="1">Isoleucine--tRNA ligase</fullName>
        <ecNumber evidence="1">6.1.1.5</ecNumber>
    </recommendedName>
    <alternativeName>
        <fullName evidence="1">Isoleucyl-tRNA synthetase</fullName>
        <shortName evidence="1">IleRS</shortName>
    </alternativeName>
</protein>
<proteinExistence type="inferred from homology"/>
<organism>
    <name type="scientific">Burkholderia multivorans (strain ATCC 17616 / 249)</name>
    <dbReference type="NCBI Taxonomy" id="395019"/>
    <lineage>
        <taxon>Bacteria</taxon>
        <taxon>Pseudomonadati</taxon>
        <taxon>Pseudomonadota</taxon>
        <taxon>Betaproteobacteria</taxon>
        <taxon>Burkholderiales</taxon>
        <taxon>Burkholderiaceae</taxon>
        <taxon>Burkholderia</taxon>
        <taxon>Burkholderia cepacia complex</taxon>
    </lineage>
</organism>
<evidence type="ECO:0000255" key="1">
    <source>
        <dbReference type="HAMAP-Rule" id="MF_02002"/>
    </source>
</evidence>
<evidence type="ECO:0000256" key="2">
    <source>
        <dbReference type="SAM" id="MobiDB-lite"/>
    </source>
</evidence>
<sequence>MSNKKADSKPQAKYPVNLLDTPFPMRGDLPKREPQWVKEWEERGVYEKIRAASKGRPKFILHDGPPYANGDIHLGHAVNKILKDIVVKSRNMAGFDAPYVPGWDCHGMPIEIQIEKQFGKSLPAAEVMSKARAYATEQIEKQKAGFKRLGVLGDWADPYKTMNFVNEAEEIRALGKIIEKGYVYRGLKPVNWCFDCGSALAEAEVEYKDRTDPTIDVMFPFAEPEKTAQAFGLPALPRAEGGIVIWTTTPWTIPANQALNLHPEIVYALVDTERGLLIVAEERVAACMEEFKLSGRVVATAPGVKLVNLRFHHPLASAHPGYKRTAPVYLGDYVTTDTGTGVVHSSPAYGVEDFISCKTHGMTDSDIINPVMGDGRYIESLPLFGGLSIWDANPKVVDALRDAGTLLRSEKYTHSYMHCWRHKTPIIYRATSQWFAGMDVTPREGGKTLRETALEGVEATAFYPSWGKQRLFSMIANRPDWTLSRQRQWGVPMAFFVHKETGELHPRTLELLEEVAKRVEKSGIEAWQTLDPRELIGDDANLYEKNRDTLDVWFDSGTTHWHVLRGSHKDQLQFPADLYLEGSDQHRGWFHSSLLTASMLDGRAPYKGLLTHGFTVDGEGRKMSKSLGNGVDPHEVANRLGAEIIRLWIASTDYSGELAISEEILKRVTEGYRRIRNTLRFLLANLSDFDYAQHAVPVDEWLEIDRYAVAFSAQLQTELLAYYEKYEFHPVVAKLQTYCSEDLGGFYLDVLKDRLYTSAPDSRARRSAQTALYHLTQGLLRVLAPFLSFTAEEAWKVFQPASDTIFTETYYAYPDVADADALIDKWSLLRDVRGTVTKALEEARTANRIGSSLQAEVTVHASGARYDALASLGDDLKFVLITSAATVVKVDDEAQEGVDVAASKYQKCERCWHYREDVGAHADHPTLCGRCFSNLFENGEIRSAA</sequence>
<accession>A9AGN6</accession>